<geneLocation type="chloroplast"/>
<name>PSBJ_POPDE</name>
<proteinExistence type="inferred from homology"/>
<dbReference type="EMBL" id="X89651">
    <property type="protein sequence ID" value="CAA61801.1"/>
    <property type="molecule type" value="Genomic_DNA"/>
</dbReference>
<dbReference type="RefSeq" id="YP_009555911.1">
    <property type="nucleotide sequence ID" value="NC_040929.1"/>
</dbReference>
<dbReference type="SMR" id="P92417"/>
<dbReference type="GeneID" id="39110596"/>
<dbReference type="GO" id="GO:0009535">
    <property type="term" value="C:chloroplast thylakoid membrane"/>
    <property type="evidence" value="ECO:0007669"/>
    <property type="project" value="UniProtKB-SubCell"/>
</dbReference>
<dbReference type="GO" id="GO:0009539">
    <property type="term" value="C:photosystem II reaction center"/>
    <property type="evidence" value="ECO:0007669"/>
    <property type="project" value="InterPro"/>
</dbReference>
<dbReference type="GO" id="GO:0015979">
    <property type="term" value="P:photosynthesis"/>
    <property type="evidence" value="ECO:0007669"/>
    <property type="project" value="UniProtKB-UniRule"/>
</dbReference>
<dbReference type="Gene3D" id="6.10.250.2070">
    <property type="match status" value="1"/>
</dbReference>
<dbReference type="HAMAP" id="MF_01305">
    <property type="entry name" value="PSII_PsbJ"/>
    <property type="match status" value="1"/>
</dbReference>
<dbReference type="InterPro" id="IPR002682">
    <property type="entry name" value="PSII_PsbJ"/>
</dbReference>
<dbReference type="InterPro" id="IPR037267">
    <property type="entry name" value="PSII_PsbJ_sf"/>
</dbReference>
<dbReference type="NCBIfam" id="NF002722">
    <property type="entry name" value="PRK02565.1"/>
    <property type="match status" value="1"/>
</dbReference>
<dbReference type="PANTHER" id="PTHR34812">
    <property type="entry name" value="PHOTOSYSTEM II REACTION CENTER PROTEIN J"/>
    <property type="match status" value="1"/>
</dbReference>
<dbReference type="PANTHER" id="PTHR34812:SF3">
    <property type="entry name" value="PHOTOSYSTEM II REACTION CENTER PROTEIN J"/>
    <property type="match status" value="1"/>
</dbReference>
<dbReference type="Pfam" id="PF01788">
    <property type="entry name" value="PsbJ"/>
    <property type="match status" value="1"/>
</dbReference>
<dbReference type="SUPFAM" id="SSF161021">
    <property type="entry name" value="Photosystem II reaction center protein J, PsbJ"/>
    <property type="match status" value="1"/>
</dbReference>
<comment type="function">
    <text evidence="1">One of the components of the core complex of photosystem II (PSII). PSII is a light-driven water:plastoquinone oxidoreductase that uses light energy to abstract electrons from H(2)O, generating O(2) and a proton gradient subsequently used for ATP formation. It consists of a core antenna complex that captures photons, and an electron transfer chain that converts photonic excitation into a charge separation.</text>
</comment>
<comment type="subunit">
    <text evidence="1">PSII is composed of 1 copy each of membrane proteins PsbA, PsbB, PsbC, PsbD, PsbE, PsbF, PsbH, PsbI, PsbJ, PsbK, PsbL, PsbM, PsbT, PsbX, PsbY, PsbZ, Psb30/Ycf12, at least 3 peripheral proteins of the oxygen-evolving complex and a large number of cofactors. It forms dimeric complexes.</text>
</comment>
<comment type="subcellular location">
    <subcellularLocation>
        <location evidence="1">Plastid</location>
        <location evidence="1">Chloroplast thylakoid membrane</location>
        <topology evidence="1">Single-pass membrane protein</topology>
    </subcellularLocation>
</comment>
<comment type="similarity">
    <text evidence="1">Belongs to the PsbJ family.</text>
</comment>
<reference key="1">
    <citation type="submission" date="1997-02" db="EMBL/GenBank/DDBJ databases">
        <authorList>
            <person name="Naithani S."/>
        </authorList>
    </citation>
    <scope>NUCLEOTIDE SEQUENCE [GENOMIC DNA]</scope>
    <source>
        <strain>cv. Stoneville D121</strain>
        <tissue>Leaf</tissue>
    </source>
</reference>
<sequence>MADTTGRIPLWIIGTVTGIPVIGLIGIFFYGSYSGLGSSL</sequence>
<evidence type="ECO:0000255" key="1">
    <source>
        <dbReference type="HAMAP-Rule" id="MF_01305"/>
    </source>
</evidence>
<protein>
    <recommendedName>
        <fullName evidence="1">Photosystem II reaction center protein J</fullName>
        <shortName evidence="1">PSII-J</shortName>
    </recommendedName>
</protein>
<gene>
    <name evidence="1" type="primary">psbJ</name>
</gene>
<accession>P92417</accession>
<organism>
    <name type="scientific">Populus deltoides</name>
    <name type="common">Eastern poplar</name>
    <name type="synonym">Eastern cottonwood</name>
    <dbReference type="NCBI Taxonomy" id="3696"/>
    <lineage>
        <taxon>Eukaryota</taxon>
        <taxon>Viridiplantae</taxon>
        <taxon>Streptophyta</taxon>
        <taxon>Embryophyta</taxon>
        <taxon>Tracheophyta</taxon>
        <taxon>Spermatophyta</taxon>
        <taxon>Magnoliopsida</taxon>
        <taxon>eudicotyledons</taxon>
        <taxon>Gunneridae</taxon>
        <taxon>Pentapetalae</taxon>
        <taxon>rosids</taxon>
        <taxon>fabids</taxon>
        <taxon>Malpighiales</taxon>
        <taxon>Salicaceae</taxon>
        <taxon>Saliceae</taxon>
        <taxon>Populus</taxon>
    </lineage>
</organism>
<feature type="chain" id="PRO_0000216613" description="Photosystem II reaction center protein J">
    <location>
        <begin position="1"/>
        <end position="40"/>
    </location>
</feature>
<feature type="transmembrane region" description="Helical" evidence="1">
    <location>
        <begin position="8"/>
        <end position="28"/>
    </location>
</feature>
<keyword id="KW-0150">Chloroplast</keyword>
<keyword id="KW-0472">Membrane</keyword>
<keyword id="KW-0602">Photosynthesis</keyword>
<keyword id="KW-0604">Photosystem II</keyword>
<keyword id="KW-0934">Plastid</keyword>
<keyword id="KW-0674">Reaction center</keyword>
<keyword id="KW-0793">Thylakoid</keyword>
<keyword id="KW-0812">Transmembrane</keyword>
<keyword id="KW-1133">Transmembrane helix</keyword>